<proteinExistence type="inferred from homology"/>
<comment type="function">
    <text evidence="1">One of the primary rRNA binding proteins, it binds directly to 16S rRNA central domain where it helps coordinate assembly of the platform of the 30S subunit.</text>
</comment>
<comment type="subunit">
    <text evidence="1">Part of the 30S ribosomal subunit. Contacts proteins S5 and S12.</text>
</comment>
<comment type="similarity">
    <text evidence="1">Belongs to the universal ribosomal protein uS8 family.</text>
</comment>
<evidence type="ECO:0000255" key="1">
    <source>
        <dbReference type="HAMAP-Rule" id="MF_01302"/>
    </source>
</evidence>
<evidence type="ECO:0000305" key="2"/>
<sequence length="131" mass="14106">MAMSDPIADMLTRIRNAQLAEKASVSMPSSKVKVAIAAVLKDEGYVEDFAVRQADGKANLEIALKYYAGRPVIERIERISKPGLRIYKGCDDIPRVMNGLGVAIVSTPKGVMTDRKARASKVGGEVLCIVA</sequence>
<feature type="chain" id="PRO_0000225867" description="Small ribosomal subunit protein uS8">
    <location>
        <begin position="1"/>
        <end position="131"/>
    </location>
</feature>
<organism>
    <name type="scientific">Dechloromonas aromatica (strain RCB)</name>
    <dbReference type="NCBI Taxonomy" id="159087"/>
    <lineage>
        <taxon>Bacteria</taxon>
        <taxon>Pseudomonadati</taxon>
        <taxon>Pseudomonadota</taxon>
        <taxon>Betaproteobacteria</taxon>
        <taxon>Rhodocyclales</taxon>
        <taxon>Azonexaceae</taxon>
        <taxon>Dechloromonas</taxon>
    </lineage>
</organism>
<protein>
    <recommendedName>
        <fullName evidence="1">Small ribosomal subunit protein uS8</fullName>
    </recommendedName>
    <alternativeName>
        <fullName evidence="2">30S ribosomal protein S8</fullName>
    </alternativeName>
</protein>
<keyword id="KW-0687">Ribonucleoprotein</keyword>
<keyword id="KW-0689">Ribosomal protein</keyword>
<keyword id="KW-0694">RNA-binding</keyword>
<keyword id="KW-0699">rRNA-binding</keyword>
<name>RS8_DECAR</name>
<dbReference type="EMBL" id="CP000089">
    <property type="protein sequence ID" value="AAZ45092.1"/>
    <property type="molecule type" value="Genomic_DNA"/>
</dbReference>
<dbReference type="SMR" id="Q47J89"/>
<dbReference type="STRING" id="159087.Daro_0333"/>
<dbReference type="KEGG" id="dar:Daro_0333"/>
<dbReference type="eggNOG" id="COG0096">
    <property type="taxonomic scope" value="Bacteria"/>
</dbReference>
<dbReference type="HOGENOM" id="CLU_098428_0_0_4"/>
<dbReference type="OrthoDB" id="9802617at2"/>
<dbReference type="GO" id="GO:1990904">
    <property type="term" value="C:ribonucleoprotein complex"/>
    <property type="evidence" value="ECO:0007669"/>
    <property type="project" value="UniProtKB-KW"/>
</dbReference>
<dbReference type="GO" id="GO:0005840">
    <property type="term" value="C:ribosome"/>
    <property type="evidence" value="ECO:0007669"/>
    <property type="project" value="UniProtKB-KW"/>
</dbReference>
<dbReference type="GO" id="GO:0019843">
    <property type="term" value="F:rRNA binding"/>
    <property type="evidence" value="ECO:0007669"/>
    <property type="project" value="UniProtKB-UniRule"/>
</dbReference>
<dbReference type="GO" id="GO:0003735">
    <property type="term" value="F:structural constituent of ribosome"/>
    <property type="evidence" value="ECO:0007669"/>
    <property type="project" value="InterPro"/>
</dbReference>
<dbReference type="GO" id="GO:0006412">
    <property type="term" value="P:translation"/>
    <property type="evidence" value="ECO:0007669"/>
    <property type="project" value="UniProtKB-UniRule"/>
</dbReference>
<dbReference type="FunFam" id="3.30.1370.30:FF:000002">
    <property type="entry name" value="30S ribosomal protein S8"/>
    <property type="match status" value="1"/>
</dbReference>
<dbReference type="FunFam" id="3.30.1490.10:FF:000001">
    <property type="entry name" value="30S ribosomal protein S8"/>
    <property type="match status" value="1"/>
</dbReference>
<dbReference type="Gene3D" id="3.30.1370.30">
    <property type="match status" value="1"/>
</dbReference>
<dbReference type="Gene3D" id="3.30.1490.10">
    <property type="match status" value="1"/>
</dbReference>
<dbReference type="HAMAP" id="MF_01302_B">
    <property type="entry name" value="Ribosomal_uS8_B"/>
    <property type="match status" value="1"/>
</dbReference>
<dbReference type="InterPro" id="IPR000630">
    <property type="entry name" value="Ribosomal_uS8"/>
</dbReference>
<dbReference type="InterPro" id="IPR047863">
    <property type="entry name" value="Ribosomal_uS8_CS"/>
</dbReference>
<dbReference type="InterPro" id="IPR035987">
    <property type="entry name" value="Ribosomal_uS8_sf"/>
</dbReference>
<dbReference type="NCBIfam" id="NF001109">
    <property type="entry name" value="PRK00136.1"/>
    <property type="match status" value="1"/>
</dbReference>
<dbReference type="PANTHER" id="PTHR11758">
    <property type="entry name" value="40S RIBOSOMAL PROTEIN S15A"/>
    <property type="match status" value="1"/>
</dbReference>
<dbReference type="Pfam" id="PF00410">
    <property type="entry name" value="Ribosomal_S8"/>
    <property type="match status" value="1"/>
</dbReference>
<dbReference type="SUPFAM" id="SSF56047">
    <property type="entry name" value="Ribosomal protein S8"/>
    <property type="match status" value="1"/>
</dbReference>
<dbReference type="PROSITE" id="PS00053">
    <property type="entry name" value="RIBOSOMAL_S8"/>
    <property type="match status" value="1"/>
</dbReference>
<gene>
    <name evidence="1" type="primary">rpsH</name>
    <name type="ordered locus">Daro_0333</name>
</gene>
<reference key="1">
    <citation type="journal article" date="2009" name="BMC Genomics">
        <title>Metabolic analysis of the soil microbe Dechloromonas aromatica str. RCB: indications of a surprisingly complex life-style and cryptic anaerobic pathways for aromatic degradation.</title>
        <authorList>
            <person name="Salinero K.K."/>
            <person name="Keller K."/>
            <person name="Feil W.S."/>
            <person name="Feil H."/>
            <person name="Trong S."/>
            <person name="Di Bartolo G."/>
            <person name="Lapidus A."/>
        </authorList>
    </citation>
    <scope>NUCLEOTIDE SEQUENCE [LARGE SCALE GENOMIC DNA]</scope>
    <source>
        <strain>RCB</strain>
    </source>
</reference>
<accession>Q47J89</accession>